<comment type="function">
    <text evidence="1 6 7">ATP-dependent RNA helicase required during spermatogenesis (PubMed:10920202, PubMed:21034600). Required to repress transposable elements and preventing their mobilization, which is essential for the germline integrity (By similarity). Acts via the piRNA metabolic process, which mediates the repression of transposable elements during meiosis by forming complexes composed of piRNAs and Piwi proteins and governs the methylation and subsequent repression of transposons (By similarity). Involved in the secondary piRNAs metabolic process, the production of piRNAs in fetal male germ cells through a ping-pong amplification cycle (By similarity). Required for PIWIL2 slicing-triggered piRNA biogenesis: helicase activity enables utilization of one of the slice cleavage fragments generated by PIWIL2 and processing these pre-piRNAs into piRNAs (By similarity).</text>
</comment>
<comment type="catalytic activity">
    <reaction evidence="1">
        <text>ATP + H2O = ADP + phosphate + H(+)</text>
        <dbReference type="Rhea" id="RHEA:13065"/>
        <dbReference type="ChEBI" id="CHEBI:15377"/>
        <dbReference type="ChEBI" id="CHEBI:15378"/>
        <dbReference type="ChEBI" id="CHEBI:30616"/>
        <dbReference type="ChEBI" id="CHEBI:43474"/>
        <dbReference type="ChEBI" id="CHEBI:456216"/>
        <dbReference type="EC" id="3.6.4.13"/>
    </reaction>
</comment>
<comment type="subunit">
    <text evidence="1 8">Found in a mRNP complex, at least composed of TDRD1, TDRD6, TDRD7 and DDX4 (By similarity). Interacts with RANBP9 (PubMed:27622290). Interacts with RANBP10. Interacts with PIWIL2 and MAEL. Interacts with BMAL1 and CLOCK. Interacts with Tex19.1 and, probably, Tex19.2 (By similarity). Interacts with RBM46 (By similarity).</text>
</comment>
<comment type="subcellular location">
    <subcellularLocation>
        <location evidence="1">Cytoplasm</location>
    </subcellularLocation>
    <subcellularLocation>
        <location evidence="1">Cytoplasm</location>
        <location evidence="1">Perinuclear region</location>
    </subcellularLocation>
    <text evidence="1">Component of the meiotic nuage, also named P granule, a germ-cell-specific organelle required to repress transposon activity during meiosis.</text>
</comment>
<comment type="alternative products">
    <event type="alternative splicing"/>
    <isoform>
        <id>Q9NQI0-1</id>
        <name>1</name>
        <sequence type="displayed"/>
    </isoform>
    <isoform>
        <id>Q9NQI0-2</id>
        <name>2</name>
        <sequence type="described" ref="VSP_011197"/>
    </isoform>
    <isoform>
        <id>Q9NQI0-3</id>
        <name>3</name>
        <sequence type="described" ref="VSP_046132 VSP_011197 VSP_046133"/>
    </isoform>
    <isoform>
        <id>Q9NQI0-4</id>
        <name>4</name>
        <sequence type="described" ref="VSP_047177"/>
    </isoform>
</comment>
<comment type="tissue specificity">
    <text evidence="6">Expressed only in ovary and testis. Expressed in migratory primordial germ cells in the region of the gonadal ridge in both sexes.</text>
</comment>
<comment type="similarity">
    <text evidence="11">Belongs to the DEAD box helicase family. DDX4/VASA subfamily.</text>
</comment>
<accession>Q9NQI0</accession>
<accession>A8K8Q2</accession>
<accession>B3KSF4</accession>
<accession>D6RDK4</accession>
<accession>E9PCD8</accession>
<accession>Q5M7Z3</accession>
<accession>Q86VX0</accession>
<accession>Q9NT92</accession>
<accession>Q9NYB1</accession>
<name>DDX4_HUMAN</name>
<gene>
    <name type="primary">DDX4</name>
    <name type="synonym">VASA</name>
</gene>
<keyword id="KW-0025">Alternative splicing</keyword>
<keyword id="KW-0067">ATP-binding</keyword>
<keyword id="KW-0963">Cytoplasm</keyword>
<keyword id="KW-0217">Developmental protein</keyword>
<keyword id="KW-0221">Differentiation</keyword>
<keyword id="KW-0347">Helicase</keyword>
<keyword id="KW-0378">Hydrolase</keyword>
<keyword id="KW-0469">Meiosis</keyword>
<keyword id="KW-0547">Nucleotide-binding</keyword>
<keyword id="KW-0597">Phosphoprotein</keyword>
<keyword id="KW-1267">Proteomics identification</keyword>
<keyword id="KW-1185">Reference proteome</keyword>
<keyword id="KW-0677">Repeat</keyword>
<keyword id="KW-0943">RNA-mediated gene silencing</keyword>
<keyword id="KW-0744">Spermatogenesis</keyword>
<evidence type="ECO:0000250" key="1">
    <source>
        <dbReference type="UniProtKB" id="Q61496"/>
    </source>
</evidence>
<evidence type="ECO:0000250" key="2">
    <source>
        <dbReference type="UniProtKB" id="Q64060"/>
    </source>
</evidence>
<evidence type="ECO:0000255" key="3">
    <source>
        <dbReference type="PROSITE-ProRule" id="PRU00541"/>
    </source>
</evidence>
<evidence type="ECO:0000255" key="4">
    <source>
        <dbReference type="PROSITE-ProRule" id="PRU00542"/>
    </source>
</evidence>
<evidence type="ECO:0000256" key="5">
    <source>
        <dbReference type="SAM" id="MobiDB-lite"/>
    </source>
</evidence>
<evidence type="ECO:0000269" key="6">
    <source>
    </source>
</evidence>
<evidence type="ECO:0000269" key="7">
    <source>
    </source>
</evidence>
<evidence type="ECO:0000269" key="8">
    <source>
    </source>
</evidence>
<evidence type="ECO:0000303" key="9">
    <source>
    </source>
</evidence>
<evidence type="ECO:0000303" key="10">
    <source>
    </source>
</evidence>
<evidence type="ECO:0000305" key="11"/>
<organism>
    <name type="scientific">Homo sapiens</name>
    <name type="common">Human</name>
    <dbReference type="NCBI Taxonomy" id="9606"/>
    <lineage>
        <taxon>Eukaryota</taxon>
        <taxon>Metazoa</taxon>
        <taxon>Chordata</taxon>
        <taxon>Craniata</taxon>
        <taxon>Vertebrata</taxon>
        <taxon>Euteleostomi</taxon>
        <taxon>Mammalia</taxon>
        <taxon>Eutheria</taxon>
        <taxon>Euarchontoglires</taxon>
        <taxon>Primates</taxon>
        <taxon>Haplorrhini</taxon>
        <taxon>Catarrhini</taxon>
        <taxon>Hominidae</taxon>
        <taxon>Homo</taxon>
    </lineage>
</organism>
<dbReference type="EC" id="3.6.4.13" evidence="1"/>
<dbReference type="EMBL" id="AY004154">
    <property type="protein sequence ID" value="AAF86585.1"/>
    <property type="molecule type" value="mRNA"/>
</dbReference>
<dbReference type="EMBL" id="AF262962">
    <property type="protein sequence ID" value="AAF72705.1"/>
    <property type="molecule type" value="mRNA"/>
</dbReference>
<dbReference type="EMBL" id="AK093439">
    <property type="protein sequence ID" value="BAG52716.1"/>
    <property type="molecule type" value="mRNA"/>
</dbReference>
<dbReference type="EMBL" id="AK292417">
    <property type="protein sequence ID" value="BAF85106.1"/>
    <property type="molecule type" value="mRNA"/>
</dbReference>
<dbReference type="EMBL" id="AC016632">
    <property type="status" value="NOT_ANNOTATED_CDS"/>
    <property type="molecule type" value="Genomic_DNA"/>
</dbReference>
<dbReference type="EMBL" id="CH471123">
    <property type="protein sequence ID" value="EAW54929.1"/>
    <property type="molecule type" value="Genomic_DNA"/>
</dbReference>
<dbReference type="EMBL" id="BC047455">
    <property type="protein sequence ID" value="AAH47455.1"/>
    <property type="molecule type" value="mRNA"/>
</dbReference>
<dbReference type="EMBL" id="BC088362">
    <property type="protein sequence ID" value="AAH88362.1"/>
    <property type="molecule type" value="mRNA"/>
</dbReference>
<dbReference type="EMBL" id="AL137462">
    <property type="protein sequence ID" value="CAB70750.1"/>
    <property type="molecule type" value="mRNA"/>
</dbReference>
<dbReference type="CCDS" id="CCDS3969.1">
    <molecule id="Q9NQI0-1"/>
</dbReference>
<dbReference type="CCDS" id="CCDS47208.1">
    <molecule id="Q9NQI0-2"/>
</dbReference>
<dbReference type="CCDS" id="CCDS54854.1">
    <molecule id="Q9NQI0-4"/>
</dbReference>
<dbReference type="CCDS" id="CCDS54855.1">
    <molecule id="Q9NQI0-3"/>
</dbReference>
<dbReference type="PIR" id="T46407">
    <property type="entry name" value="T46407"/>
</dbReference>
<dbReference type="RefSeq" id="NP_001136021.1">
    <molecule id="Q9NQI0-2"/>
    <property type="nucleotide sequence ID" value="NM_001142549.2"/>
</dbReference>
<dbReference type="RefSeq" id="NP_001160005.1">
    <molecule id="Q9NQI0-4"/>
    <property type="nucleotide sequence ID" value="NM_001166533.2"/>
</dbReference>
<dbReference type="RefSeq" id="NP_001160006.1">
    <molecule id="Q9NQI0-3"/>
    <property type="nucleotide sequence ID" value="NM_001166534.2"/>
</dbReference>
<dbReference type="RefSeq" id="NP_077726.1">
    <molecule id="Q9NQI0-1"/>
    <property type="nucleotide sequence ID" value="NM_024415.3"/>
</dbReference>
<dbReference type="RefSeq" id="XP_024301887.1">
    <molecule id="Q9NQI0-1"/>
    <property type="nucleotide sequence ID" value="XM_024446119.2"/>
</dbReference>
<dbReference type="RefSeq" id="XP_054208812.1">
    <molecule id="Q9NQI0-1"/>
    <property type="nucleotide sequence ID" value="XM_054352837.1"/>
</dbReference>
<dbReference type="SMR" id="Q9NQI0"/>
<dbReference type="BioGRID" id="120009">
    <property type="interactions" value="24"/>
</dbReference>
<dbReference type="FunCoup" id="Q9NQI0">
    <property type="interactions" value="191"/>
</dbReference>
<dbReference type="IntAct" id="Q9NQI0">
    <property type="interactions" value="7"/>
</dbReference>
<dbReference type="MINT" id="Q9NQI0"/>
<dbReference type="STRING" id="9606.ENSP00000424838"/>
<dbReference type="GlyGen" id="Q9NQI0">
    <property type="glycosylation" value="1 site, 1 O-linked glycan (1 site)"/>
</dbReference>
<dbReference type="iPTMnet" id="Q9NQI0"/>
<dbReference type="PhosphoSitePlus" id="Q9NQI0"/>
<dbReference type="BioMuta" id="DDX4"/>
<dbReference type="DMDM" id="20138033"/>
<dbReference type="REPRODUCTION-2DPAGE" id="IPI00456933"/>
<dbReference type="jPOST" id="Q9NQI0"/>
<dbReference type="MassIVE" id="Q9NQI0"/>
<dbReference type="PaxDb" id="9606-ENSP00000424838"/>
<dbReference type="PeptideAtlas" id="Q9NQI0"/>
<dbReference type="ProteomicsDB" id="14124"/>
<dbReference type="ProteomicsDB" id="19429"/>
<dbReference type="ProteomicsDB" id="82159">
    <molecule id="Q9NQI0-1"/>
</dbReference>
<dbReference type="ProteomicsDB" id="82160">
    <molecule id="Q9NQI0-2"/>
</dbReference>
<dbReference type="ABCD" id="Q9NQI0">
    <property type="antibodies" value="7 sequenced antibodies"/>
</dbReference>
<dbReference type="Antibodypedia" id="23442">
    <property type="antibodies" value="410 antibodies from 39 providers"/>
</dbReference>
<dbReference type="DNASU" id="54514"/>
<dbReference type="Ensembl" id="ENST00000353507.9">
    <molecule id="Q9NQI0-2"/>
    <property type="protein sequence ID" value="ENSP00000334167.7"/>
    <property type="gene ID" value="ENSG00000152670.19"/>
</dbReference>
<dbReference type="Ensembl" id="ENST00000354991.9">
    <molecule id="Q9NQI0-2"/>
    <property type="protein sequence ID" value="ENSP00000347087.5"/>
    <property type="gene ID" value="ENSG00000152670.19"/>
</dbReference>
<dbReference type="Ensembl" id="ENST00000505374.6">
    <molecule id="Q9NQI0-1"/>
    <property type="protein sequence ID" value="ENSP00000424838.1"/>
    <property type="gene ID" value="ENSG00000152670.19"/>
</dbReference>
<dbReference type="Ensembl" id="ENST00000511853.1">
    <molecule id="Q9NQI0-3"/>
    <property type="protein sequence ID" value="ENSP00000423123.1"/>
    <property type="gene ID" value="ENSG00000152670.19"/>
</dbReference>
<dbReference type="Ensembl" id="ENST00000514278.6">
    <molecule id="Q9NQI0-4"/>
    <property type="protein sequence ID" value="ENSP00000425359.2"/>
    <property type="gene ID" value="ENSG00000152670.19"/>
</dbReference>
<dbReference type="GeneID" id="54514"/>
<dbReference type="KEGG" id="hsa:54514"/>
<dbReference type="MANE-Select" id="ENST00000505374.6">
    <property type="protein sequence ID" value="ENSP00000424838.1"/>
    <property type="RefSeq nucleotide sequence ID" value="NM_024415.3"/>
    <property type="RefSeq protein sequence ID" value="NP_077726.1"/>
</dbReference>
<dbReference type="UCSC" id="uc003jqg.5">
    <molecule id="Q9NQI0-1"/>
    <property type="organism name" value="human"/>
</dbReference>
<dbReference type="AGR" id="HGNC:18700"/>
<dbReference type="CTD" id="54514"/>
<dbReference type="DisGeNET" id="54514"/>
<dbReference type="GeneCards" id="DDX4"/>
<dbReference type="HGNC" id="HGNC:18700">
    <property type="gene designation" value="DDX4"/>
</dbReference>
<dbReference type="HPA" id="ENSG00000152670">
    <property type="expression patterns" value="Tissue enriched (testis)"/>
</dbReference>
<dbReference type="MIM" id="605281">
    <property type="type" value="gene"/>
</dbReference>
<dbReference type="neXtProt" id="NX_Q9NQI0"/>
<dbReference type="OpenTargets" id="ENSG00000152670"/>
<dbReference type="PharmGKB" id="PA38646"/>
<dbReference type="VEuPathDB" id="HostDB:ENSG00000152670"/>
<dbReference type="eggNOG" id="KOG0335">
    <property type="taxonomic scope" value="Eukaryota"/>
</dbReference>
<dbReference type="GeneTree" id="ENSGT00940000157507"/>
<dbReference type="HOGENOM" id="CLU_003041_16_3_1"/>
<dbReference type="InParanoid" id="Q9NQI0"/>
<dbReference type="OMA" id="NRXSNND"/>
<dbReference type="OrthoDB" id="196131at2759"/>
<dbReference type="PAN-GO" id="Q9NQI0">
    <property type="GO annotations" value="6 GO annotations based on evolutionary models"/>
</dbReference>
<dbReference type="PhylomeDB" id="Q9NQI0"/>
<dbReference type="TreeFam" id="TF300364"/>
<dbReference type="BRENDA" id="3.6.4.13">
    <property type="organism ID" value="2681"/>
</dbReference>
<dbReference type="PathwayCommons" id="Q9NQI0"/>
<dbReference type="Reactome" id="R-HSA-5601884">
    <property type="pathway name" value="PIWI-interacting RNA (piRNA) biogenesis"/>
</dbReference>
<dbReference type="Reactome" id="R-HSA-9696264">
    <property type="pathway name" value="RND3 GTPase cycle"/>
</dbReference>
<dbReference type="SignaLink" id="Q9NQI0"/>
<dbReference type="BioGRID-ORCS" id="54514">
    <property type="hits" value="15 hits in 1154 CRISPR screens"/>
</dbReference>
<dbReference type="CD-CODE" id="232F8A39">
    <property type="entry name" value="P-body"/>
</dbReference>
<dbReference type="CD-CODE" id="45FBF2D1">
    <property type="entry name" value="Nuage"/>
</dbReference>
<dbReference type="CD-CODE" id="A21D42E2">
    <property type="entry name" value="Synthetic Condensate 000153"/>
</dbReference>
<dbReference type="CD-CODE" id="CC266C53">
    <property type="entry name" value="Synthetic Condensate 000179"/>
</dbReference>
<dbReference type="CD-CODE" id="E603CCA4">
    <property type="entry name" value="Germ granule"/>
</dbReference>
<dbReference type="ChiTaRS" id="DDX4">
    <property type="organism name" value="human"/>
</dbReference>
<dbReference type="GenomeRNAi" id="54514"/>
<dbReference type="Pharos" id="Q9NQI0">
    <property type="development level" value="Tbio"/>
</dbReference>
<dbReference type="PRO" id="PR:Q9NQI0"/>
<dbReference type="Proteomes" id="UP000005640">
    <property type="component" value="Chromosome 5"/>
</dbReference>
<dbReference type="RNAct" id="Q9NQI0">
    <property type="molecule type" value="protein"/>
</dbReference>
<dbReference type="Bgee" id="ENSG00000152670">
    <property type="expression patterns" value="Expressed in secondary oocyte and 90 other cell types or tissues"/>
</dbReference>
<dbReference type="ExpressionAtlas" id="Q9NQI0">
    <property type="expression patterns" value="baseline and differential"/>
</dbReference>
<dbReference type="GO" id="GO:0005737">
    <property type="term" value="C:cytoplasm"/>
    <property type="evidence" value="ECO:0000314"/>
    <property type="project" value="UniProtKB"/>
</dbReference>
<dbReference type="GO" id="GO:0005634">
    <property type="term" value="C:nucleus"/>
    <property type="evidence" value="ECO:0000318"/>
    <property type="project" value="GO_Central"/>
</dbReference>
<dbReference type="GO" id="GO:0043186">
    <property type="term" value="C:P granule"/>
    <property type="evidence" value="ECO:0000318"/>
    <property type="project" value="GO_Central"/>
</dbReference>
<dbReference type="GO" id="GO:0048471">
    <property type="term" value="C:perinuclear region of cytoplasm"/>
    <property type="evidence" value="ECO:0007669"/>
    <property type="project" value="UniProtKB-SubCell"/>
</dbReference>
<dbReference type="GO" id="GO:0071546">
    <property type="term" value="C:pi-body"/>
    <property type="evidence" value="ECO:0000250"/>
    <property type="project" value="UniProtKB"/>
</dbReference>
<dbReference type="GO" id="GO:0071547">
    <property type="term" value="C:piP-body"/>
    <property type="evidence" value="ECO:0000250"/>
    <property type="project" value="UniProtKB"/>
</dbReference>
<dbReference type="GO" id="GO:0005524">
    <property type="term" value="F:ATP binding"/>
    <property type="evidence" value="ECO:0007669"/>
    <property type="project" value="UniProtKB-KW"/>
</dbReference>
<dbReference type="GO" id="GO:0016887">
    <property type="term" value="F:ATP hydrolysis activity"/>
    <property type="evidence" value="ECO:0000250"/>
    <property type="project" value="UniProtKB"/>
</dbReference>
<dbReference type="GO" id="GO:0140693">
    <property type="term" value="F:molecular condensate scaffold activity"/>
    <property type="evidence" value="ECO:0000269"/>
    <property type="project" value="DisProt"/>
</dbReference>
<dbReference type="GO" id="GO:0003729">
    <property type="term" value="F:mRNA binding"/>
    <property type="evidence" value="ECO:0000318"/>
    <property type="project" value="GO_Central"/>
</dbReference>
<dbReference type="GO" id="GO:0003724">
    <property type="term" value="F:RNA helicase activity"/>
    <property type="evidence" value="ECO:0000318"/>
    <property type="project" value="GO_Central"/>
</dbReference>
<dbReference type="GO" id="GO:0030154">
    <property type="term" value="P:cell differentiation"/>
    <property type="evidence" value="ECO:0000318"/>
    <property type="project" value="GO_Central"/>
</dbReference>
<dbReference type="GO" id="GO:0030317">
    <property type="term" value="P:flagellated sperm motility"/>
    <property type="evidence" value="ECO:0000315"/>
    <property type="project" value="UniProtKB"/>
</dbReference>
<dbReference type="GO" id="GO:0007276">
    <property type="term" value="P:gamete generation"/>
    <property type="evidence" value="ECO:0000318"/>
    <property type="project" value="GO_Central"/>
</dbReference>
<dbReference type="GO" id="GO:0007281">
    <property type="term" value="P:germ cell development"/>
    <property type="evidence" value="ECO:0000318"/>
    <property type="project" value="GO_Central"/>
</dbReference>
<dbReference type="GO" id="GO:0007141">
    <property type="term" value="P:male meiosis I"/>
    <property type="evidence" value="ECO:0000250"/>
    <property type="project" value="UniProtKB"/>
</dbReference>
<dbReference type="GO" id="GO:0007140">
    <property type="term" value="P:male meiotic nuclear division"/>
    <property type="evidence" value="ECO:0000250"/>
    <property type="project" value="UniProtKB"/>
</dbReference>
<dbReference type="GO" id="GO:0034587">
    <property type="term" value="P:piRNA processing"/>
    <property type="evidence" value="ECO:0000250"/>
    <property type="project" value="UniProtKB"/>
</dbReference>
<dbReference type="GO" id="GO:0007283">
    <property type="term" value="P:spermatogenesis"/>
    <property type="evidence" value="ECO:0000250"/>
    <property type="project" value="UniProtKB"/>
</dbReference>
<dbReference type="GO" id="GO:0141196">
    <property type="term" value="P:transposable element silencing by piRNA-mediated DNA methylation"/>
    <property type="evidence" value="ECO:0000250"/>
    <property type="project" value="UniProtKB"/>
</dbReference>
<dbReference type="GO" id="GO:0141006">
    <property type="term" value="P:transposable element silencing by piRNA-mediated heterochromatin formation"/>
    <property type="evidence" value="ECO:0000250"/>
    <property type="project" value="UniProtKB"/>
</dbReference>
<dbReference type="CDD" id="cd18052">
    <property type="entry name" value="DEADc_DDX4"/>
    <property type="match status" value="1"/>
</dbReference>
<dbReference type="CDD" id="cd18787">
    <property type="entry name" value="SF2_C_DEAD"/>
    <property type="match status" value="1"/>
</dbReference>
<dbReference type="DisProt" id="DP01066">
    <molecule id="Q9NQI0-2"/>
</dbReference>
<dbReference type="FunFam" id="3.40.50.300:FF:000008">
    <property type="entry name" value="ATP-dependent RNA helicase RhlB"/>
    <property type="match status" value="1"/>
</dbReference>
<dbReference type="FunFam" id="3.40.50.300:FF:000397">
    <property type="entry name" value="Probable ATP-dependent RNA helicase DDX4"/>
    <property type="match status" value="1"/>
</dbReference>
<dbReference type="Gene3D" id="3.40.50.300">
    <property type="entry name" value="P-loop containing nucleotide triphosphate hydrolases"/>
    <property type="match status" value="2"/>
</dbReference>
<dbReference type="IDEAL" id="IID00738"/>
<dbReference type="InterPro" id="IPR011545">
    <property type="entry name" value="DEAD/DEAH_box_helicase_dom"/>
</dbReference>
<dbReference type="InterPro" id="IPR014001">
    <property type="entry name" value="Helicase_ATP-bd"/>
</dbReference>
<dbReference type="InterPro" id="IPR001650">
    <property type="entry name" value="Helicase_C-like"/>
</dbReference>
<dbReference type="InterPro" id="IPR027417">
    <property type="entry name" value="P-loop_NTPase"/>
</dbReference>
<dbReference type="InterPro" id="IPR000629">
    <property type="entry name" value="RNA-helicase_DEAD-box_CS"/>
</dbReference>
<dbReference type="InterPro" id="IPR014014">
    <property type="entry name" value="RNA_helicase_DEAD_Q_motif"/>
</dbReference>
<dbReference type="PANTHER" id="PTHR47958">
    <property type="entry name" value="ATP-DEPENDENT RNA HELICASE DBP3"/>
    <property type="match status" value="1"/>
</dbReference>
<dbReference type="Pfam" id="PF00270">
    <property type="entry name" value="DEAD"/>
    <property type="match status" value="1"/>
</dbReference>
<dbReference type="Pfam" id="PF00271">
    <property type="entry name" value="Helicase_C"/>
    <property type="match status" value="1"/>
</dbReference>
<dbReference type="SMART" id="SM00487">
    <property type="entry name" value="DEXDc"/>
    <property type="match status" value="1"/>
</dbReference>
<dbReference type="SMART" id="SM00490">
    <property type="entry name" value="HELICc"/>
    <property type="match status" value="1"/>
</dbReference>
<dbReference type="SUPFAM" id="SSF52540">
    <property type="entry name" value="P-loop containing nucleoside triphosphate hydrolases"/>
    <property type="match status" value="2"/>
</dbReference>
<dbReference type="PROSITE" id="PS00039">
    <property type="entry name" value="DEAD_ATP_HELICASE"/>
    <property type="match status" value="1"/>
</dbReference>
<dbReference type="PROSITE" id="PS51192">
    <property type="entry name" value="HELICASE_ATP_BIND_1"/>
    <property type="match status" value="1"/>
</dbReference>
<dbReference type="PROSITE" id="PS51194">
    <property type="entry name" value="HELICASE_CTER"/>
    <property type="match status" value="1"/>
</dbReference>
<dbReference type="PROSITE" id="PS51195">
    <property type="entry name" value="Q_MOTIF"/>
    <property type="match status" value="1"/>
</dbReference>
<reference key="1">
    <citation type="journal article" date="2000" name="Proc. Natl. Acad. Sci. U.S.A.">
        <title>The human VASA gene is specifically expressed in the germ cell lineage.</title>
        <authorList>
            <person name="Castrillon D.H."/>
            <person name="Quade B.J."/>
            <person name="Wang T.Y."/>
            <person name="Quigley C."/>
            <person name="Crum C.P."/>
        </authorList>
    </citation>
    <scope>NUCLEOTIDE SEQUENCE [MRNA] (ISOFORM 1)</scope>
    <scope>FUNCTION</scope>
    <scope>SUBCELLULAR LOCATION</scope>
    <scope>TISSUE SPECIFICITY</scope>
    <source>
        <tissue>Testis</tissue>
    </source>
</reference>
<reference key="2">
    <citation type="submission" date="2000-05" db="EMBL/GenBank/DDBJ databases">
        <title>Cloning and characterization of the human VASA gene.</title>
        <authorList>
            <person name="Rocha D."/>
            <person name="Affara N."/>
        </authorList>
    </citation>
    <scope>NUCLEOTIDE SEQUENCE [MRNA] (ISOFORM 1)</scope>
</reference>
<reference key="3">
    <citation type="journal article" date="2004" name="Nat. Genet.">
        <title>Complete sequencing and characterization of 21,243 full-length human cDNAs.</title>
        <authorList>
            <person name="Ota T."/>
            <person name="Suzuki Y."/>
            <person name="Nishikawa T."/>
            <person name="Otsuki T."/>
            <person name="Sugiyama T."/>
            <person name="Irie R."/>
            <person name="Wakamatsu A."/>
            <person name="Hayashi K."/>
            <person name="Sato H."/>
            <person name="Nagai K."/>
            <person name="Kimura K."/>
            <person name="Makita H."/>
            <person name="Sekine M."/>
            <person name="Obayashi M."/>
            <person name="Nishi T."/>
            <person name="Shibahara T."/>
            <person name="Tanaka T."/>
            <person name="Ishii S."/>
            <person name="Yamamoto J."/>
            <person name="Saito K."/>
            <person name="Kawai Y."/>
            <person name="Isono Y."/>
            <person name="Nakamura Y."/>
            <person name="Nagahari K."/>
            <person name="Murakami K."/>
            <person name="Yasuda T."/>
            <person name="Iwayanagi T."/>
            <person name="Wagatsuma M."/>
            <person name="Shiratori A."/>
            <person name="Sudo H."/>
            <person name="Hosoiri T."/>
            <person name="Kaku Y."/>
            <person name="Kodaira H."/>
            <person name="Kondo H."/>
            <person name="Sugawara M."/>
            <person name="Takahashi M."/>
            <person name="Kanda K."/>
            <person name="Yokoi T."/>
            <person name="Furuya T."/>
            <person name="Kikkawa E."/>
            <person name="Omura Y."/>
            <person name="Abe K."/>
            <person name="Kamihara K."/>
            <person name="Katsuta N."/>
            <person name="Sato K."/>
            <person name="Tanikawa M."/>
            <person name="Yamazaki M."/>
            <person name="Ninomiya K."/>
            <person name="Ishibashi T."/>
            <person name="Yamashita H."/>
            <person name="Murakawa K."/>
            <person name="Fujimori K."/>
            <person name="Tanai H."/>
            <person name="Kimata M."/>
            <person name="Watanabe M."/>
            <person name="Hiraoka S."/>
            <person name="Chiba Y."/>
            <person name="Ishida S."/>
            <person name="Ono Y."/>
            <person name="Takiguchi S."/>
            <person name="Watanabe S."/>
            <person name="Yosida M."/>
            <person name="Hotuta T."/>
            <person name="Kusano J."/>
            <person name="Kanehori K."/>
            <person name="Takahashi-Fujii A."/>
            <person name="Hara H."/>
            <person name="Tanase T.-O."/>
            <person name="Nomura Y."/>
            <person name="Togiya S."/>
            <person name="Komai F."/>
            <person name="Hara R."/>
            <person name="Takeuchi K."/>
            <person name="Arita M."/>
            <person name="Imose N."/>
            <person name="Musashino K."/>
            <person name="Yuuki H."/>
            <person name="Oshima A."/>
            <person name="Sasaki N."/>
            <person name="Aotsuka S."/>
            <person name="Yoshikawa Y."/>
            <person name="Matsunawa H."/>
            <person name="Ichihara T."/>
            <person name="Shiohata N."/>
            <person name="Sano S."/>
            <person name="Moriya S."/>
            <person name="Momiyama H."/>
            <person name="Satoh N."/>
            <person name="Takami S."/>
            <person name="Terashima Y."/>
            <person name="Suzuki O."/>
            <person name="Nakagawa S."/>
            <person name="Senoh A."/>
            <person name="Mizoguchi H."/>
            <person name="Goto Y."/>
            <person name="Shimizu F."/>
            <person name="Wakebe H."/>
            <person name="Hishigaki H."/>
            <person name="Watanabe T."/>
            <person name="Sugiyama A."/>
            <person name="Takemoto M."/>
            <person name="Kawakami B."/>
            <person name="Yamazaki M."/>
            <person name="Watanabe K."/>
            <person name="Kumagai A."/>
            <person name="Itakura S."/>
            <person name="Fukuzumi Y."/>
            <person name="Fujimori Y."/>
            <person name="Komiyama M."/>
            <person name="Tashiro H."/>
            <person name="Tanigami A."/>
            <person name="Fujiwara T."/>
            <person name="Ono T."/>
            <person name="Yamada K."/>
            <person name="Fujii Y."/>
            <person name="Ozaki K."/>
            <person name="Hirao M."/>
            <person name="Ohmori Y."/>
            <person name="Kawabata A."/>
            <person name="Hikiji T."/>
            <person name="Kobatake N."/>
            <person name="Inagaki H."/>
            <person name="Ikema Y."/>
            <person name="Okamoto S."/>
            <person name="Okitani R."/>
            <person name="Kawakami T."/>
            <person name="Noguchi S."/>
            <person name="Itoh T."/>
            <person name="Shigeta K."/>
            <person name="Senba T."/>
            <person name="Matsumura K."/>
            <person name="Nakajima Y."/>
            <person name="Mizuno T."/>
            <person name="Morinaga M."/>
            <person name="Sasaki M."/>
            <person name="Togashi T."/>
            <person name="Oyama M."/>
            <person name="Hata H."/>
            <person name="Watanabe M."/>
            <person name="Komatsu T."/>
            <person name="Mizushima-Sugano J."/>
            <person name="Satoh T."/>
            <person name="Shirai Y."/>
            <person name="Takahashi Y."/>
            <person name="Nakagawa K."/>
            <person name="Okumura K."/>
            <person name="Nagase T."/>
            <person name="Nomura N."/>
            <person name="Kikuchi H."/>
            <person name="Masuho Y."/>
            <person name="Yamashita R."/>
            <person name="Nakai K."/>
            <person name="Yada T."/>
            <person name="Nakamura Y."/>
            <person name="Ohara O."/>
            <person name="Isogai T."/>
            <person name="Sugano S."/>
        </authorList>
    </citation>
    <scope>NUCLEOTIDE SEQUENCE [LARGE SCALE MRNA] (ISOFORMS 1 AND 3)</scope>
    <source>
        <tissue>Testis</tissue>
    </source>
</reference>
<reference key="4">
    <citation type="journal article" date="2004" name="Nature">
        <title>The DNA sequence and comparative analysis of human chromosome 5.</title>
        <authorList>
            <person name="Schmutz J."/>
            <person name="Martin J."/>
            <person name="Terry A."/>
            <person name="Couronne O."/>
            <person name="Grimwood J."/>
            <person name="Lowry S."/>
            <person name="Gordon L.A."/>
            <person name="Scott D."/>
            <person name="Xie G."/>
            <person name="Huang W."/>
            <person name="Hellsten U."/>
            <person name="Tran-Gyamfi M."/>
            <person name="She X."/>
            <person name="Prabhakar S."/>
            <person name="Aerts A."/>
            <person name="Altherr M."/>
            <person name="Bajorek E."/>
            <person name="Black S."/>
            <person name="Branscomb E."/>
            <person name="Caoile C."/>
            <person name="Challacombe J.F."/>
            <person name="Chan Y.M."/>
            <person name="Denys M."/>
            <person name="Detter J.C."/>
            <person name="Escobar J."/>
            <person name="Flowers D."/>
            <person name="Fotopulos D."/>
            <person name="Glavina T."/>
            <person name="Gomez M."/>
            <person name="Gonzales E."/>
            <person name="Goodstein D."/>
            <person name="Grigoriev I."/>
            <person name="Groza M."/>
            <person name="Hammon N."/>
            <person name="Hawkins T."/>
            <person name="Haydu L."/>
            <person name="Israni S."/>
            <person name="Jett J."/>
            <person name="Kadner K."/>
            <person name="Kimball H."/>
            <person name="Kobayashi A."/>
            <person name="Lopez F."/>
            <person name="Lou Y."/>
            <person name="Martinez D."/>
            <person name="Medina C."/>
            <person name="Morgan J."/>
            <person name="Nandkeshwar R."/>
            <person name="Noonan J.P."/>
            <person name="Pitluck S."/>
            <person name="Pollard M."/>
            <person name="Predki P."/>
            <person name="Priest J."/>
            <person name="Ramirez L."/>
            <person name="Retterer J."/>
            <person name="Rodriguez A."/>
            <person name="Rogers S."/>
            <person name="Salamov A."/>
            <person name="Salazar A."/>
            <person name="Thayer N."/>
            <person name="Tice H."/>
            <person name="Tsai M."/>
            <person name="Ustaszewska A."/>
            <person name="Vo N."/>
            <person name="Wheeler J."/>
            <person name="Wu K."/>
            <person name="Yang J."/>
            <person name="Dickson M."/>
            <person name="Cheng J.-F."/>
            <person name="Eichler E.E."/>
            <person name="Olsen A."/>
            <person name="Pennacchio L.A."/>
            <person name="Rokhsar D.S."/>
            <person name="Richardson P."/>
            <person name="Lucas S.M."/>
            <person name="Myers R.M."/>
            <person name="Rubin E.M."/>
        </authorList>
    </citation>
    <scope>NUCLEOTIDE SEQUENCE [LARGE SCALE GENOMIC DNA]</scope>
</reference>
<reference key="5">
    <citation type="submission" date="2005-07" db="EMBL/GenBank/DDBJ databases">
        <authorList>
            <person name="Mural R.J."/>
            <person name="Istrail S."/>
            <person name="Sutton G.G."/>
            <person name="Florea L."/>
            <person name="Halpern A.L."/>
            <person name="Mobarry C.M."/>
            <person name="Lippert R."/>
            <person name="Walenz B."/>
            <person name="Shatkay H."/>
            <person name="Dew I."/>
            <person name="Miller J.R."/>
            <person name="Flanigan M.J."/>
            <person name="Edwards N.J."/>
            <person name="Bolanos R."/>
            <person name="Fasulo D."/>
            <person name="Halldorsson B.V."/>
            <person name="Hannenhalli S."/>
            <person name="Turner R."/>
            <person name="Yooseph S."/>
            <person name="Lu F."/>
            <person name="Nusskern D.R."/>
            <person name="Shue B.C."/>
            <person name="Zheng X.H."/>
            <person name="Zhong F."/>
            <person name="Delcher A.L."/>
            <person name="Huson D.H."/>
            <person name="Kravitz S.A."/>
            <person name="Mouchard L."/>
            <person name="Reinert K."/>
            <person name="Remington K.A."/>
            <person name="Clark A.G."/>
            <person name="Waterman M.S."/>
            <person name="Eichler E.E."/>
            <person name="Adams M.D."/>
            <person name="Hunkapiller M.W."/>
            <person name="Myers E.W."/>
            <person name="Venter J.C."/>
        </authorList>
    </citation>
    <scope>NUCLEOTIDE SEQUENCE [LARGE SCALE GENOMIC DNA]</scope>
</reference>
<reference key="6">
    <citation type="journal article" date="2004" name="Genome Res.">
        <title>The status, quality, and expansion of the NIH full-length cDNA project: the Mammalian Gene Collection (MGC).</title>
        <authorList>
            <consortium name="The MGC Project Team"/>
        </authorList>
    </citation>
    <scope>NUCLEOTIDE SEQUENCE [LARGE SCALE MRNA] (ISOFORMS 1 AND 2)</scope>
    <source>
        <tissue>Testis</tissue>
    </source>
</reference>
<reference key="7">
    <citation type="journal article" date="2007" name="BMC Genomics">
        <title>The full-ORF clone resource of the German cDNA consortium.</title>
        <authorList>
            <person name="Bechtel S."/>
            <person name="Rosenfelder H."/>
            <person name="Duda A."/>
            <person name="Schmidt C.P."/>
            <person name="Ernst U."/>
            <person name="Wellenreuther R."/>
            <person name="Mehrle A."/>
            <person name="Schuster C."/>
            <person name="Bahr A."/>
            <person name="Bloecker H."/>
            <person name="Heubner D."/>
            <person name="Hoerlein A."/>
            <person name="Michel G."/>
            <person name="Wedler H."/>
            <person name="Koehrer K."/>
            <person name="Ottenwaelder B."/>
            <person name="Poustka A."/>
            <person name="Wiemann S."/>
            <person name="Schupp I."/>
        </authorList>
    </citation>
    <scope>NUCLEOTIDE SEQUENCE [LARGE SCALE MRNA] OF 90-724 (ISOFORM 1)</scope>
    <source>
        <tissue>Testis</tissue>
    </source>
</reference>
<reference key="8">
    <citation type="journal article" date="2009" name="Science">
        <title>Lysine acetylation targets protein complexes and co-regulates major cellular functions.</title>
        <authorList>
            <person name="Choudhary C."/>
            <person name="Kumar C."/>
            <person name="Gnad F."/>
            <person name="Nielsen M.L."/>
            <person name="Rehman M."/>
            <person name="Walther T.C."/>
            <person name="Olsen J.V."/>
            <person name="Mann M."/>
        </authorList>
    </citation>
    <scope>IDENTIFICATION BY MASS SPECTROMETRY [LARGE SCALE ANALYSIS]</scope>
</reference>
<reference key="9">
    <citation type="journal article" date="2010" name="Chin. Med. J.">
        <title>Spermatozoal protein profiles in male infertility with asthenozoospermia.</title>
        <authorList>
            <person name="Li H.J."/>
            <person name="Yu N."/>
            <person name="Zhang X.Y."/>
            <person name="Jin W."/>
            <person name="Li H.Z."/>
        </authorList>
    </citation>
    <scope>FUNCTION</scope>
</reference>
<reference key="10">
    <citation type="journal article" date="2011" name="Hum. Mol. Genet.">
        <title>NANOS3 function in human germ cell development.</title>
        <authorList>
            <person name="Julaton V.T."/>
            <person name="Reijo Pera R.A."/>
        </authorList>
    </citation>
    <scope>SUBCELLULAR LOCATION</scope>
</reference>
<reference key="11">
    <citation type="journal article" date="2016" name="J. Mol. Biol.">
        <title>Structural Basis for the Interaction between the IUS-SPRY Domain of RanBPM and DDX-4 in Germ Cell Development.</title>
        <authorList>
            <person name="Hong S.K."/>
            <person name="Kim K.H."/>
            <person name="Song E.J."/>
            <person name="Kim E.E."/>
        </authorList>
    </citation>
    <scope>INTERACTION WITH RANBP9</scope>
</reference>
<sequence length="724" mass="79308">MGDEDWEAEINPHMSSYVPIFEKDRYSGENGDNFNRTPASSSEMDDGPSRRDHFMKSGFASGRNFGNRDAGECNKRDNTSTMGGFGVGKSFGNRGFSNSRFEDGDSSGFWRESSNDCEDNPTRNRGFSKRGGYRDGNNSEASGPYRRGGRGSFRGCRGGFGLGSPNNDLDPDECMQRTGGLFGSRRPVLSGTGNGDTSQSRSGSGSERGGYKGLNEEVITGSGKNSWKSEAEGGESSDTQGPKVTYIPPPPPEDEDSIFAHYQTGINFDKYDTILVEVSGHDAPPAILTFEEANLCQTLNNNIAKAGYTKLTPVQKYSIPIILAGRDLMACAQTGSGKTAAFLLPILAHMMHDGITASRFKELQEPECIIVAPTRELVNQIYLEARKFSFGTCVRAVVIYGGTQLGHSIRQIVQGCNILCATPGRLMDIIGKEKIGLKQIKYLVLDEADRMLDMGFGPEMKKLISCPGMPSKEQRQTLMFSATFPEEIQRLAAEFLKSNYLFVAVGQVGGACRDVQQTVLQVGQFSKREKLVEILRNIGDERTMVFVETKKKADFIATFLCQEKISTTSIHGDREQREREQALGDFRFGKCPVLVATSVAARGLDIENVQHVINFDLPSTIDEYVHRIGRTGRCGNTGRAISFFDLESDNHLAQPLVKVLTDAQQDVPAWLEEIAFSTYIPGFSGSTRGNVFASVDTRKGKSTLNTAGFSSSQAPNPVDDESWD</sequence>
<protein>
    <recommendedName>
        <fullName>Probable ATP-dependent RNA helicase DDX4</fullName>
        <ecNumber evidence="1">3.6.4.13</ecNumber>
    </recommendedName>
    <alternativeName>
        <fullName>DEAD box protein 4</fullName>
    </alternativeName>
    <alternativeName>
        <fullName>Vasa homolog</fullName>
    </alternativeName>
</protein>
<proteinExistence type="evidence at protein level"/>
<feature type="chain" id="PRO_0000054977" description="Probable ATP-dependent RNA helicase DDX4">
    <location>
        <begin position="1"/>
        <end position="724"/>
    </location>
</feature>
<feature type="domain" description="Helicase ATP-binding" evidence="3">
    <location>
        <begin position="319"/>
        <end position="502"/>
    </location>
</feature>
<feature type="domain" description="Helicase C-terminal" evidence="4">
    <location>
        <begin position="530"/>
        <end position="675"/>
    </location>
</feature>
<feature type="region of interest" description="Disordered" evidence="5">
    <location>
        <begin position="1"/>
        <end position="246"/>
    </location>
</feature>
<feature type="region of interest" description="Interaction with RANBP9" evidence="8">
    <location>
        <begin position="228"/>
        <end position="247"/>
    </location>
</feature>
<feature type="region of interest" description="Disordered" evidence="5">
    <location>
        <begin position="704"/>
        <end position="724"/>
    </location>
</feature>
<feature type="short sequence motif" description="Q motif">
    <location>
        <begin position="288"/>
        <end position="316"/>
    </location>
</feature>
<feature type="short sequence motif" description="DEAD box" evidence="1">
    <location>
        <begin position="446"/>
        <end position="449"/>
    </location>
</feature>
<feature type="compositionally biased region" description="Polar residues" evidence="5">
    <location>
        <begin position="30"/>
        <end position="42"/>
    </location>
</feature>
<feature type="compositionally biased region" description="Basic and acidic residues" evidence="5">
    <location>
        <begin position="69"/>
        <end position="78"/>
    </location>
</feature>
<feature type="compositionally biased region" description="Gly residues" evidence="5">
    <location>
        <begin position="150"/>
        <end position="162"/>
    </location>
</feature>
<feature type="compositionally biased region" description="Low complexity" evidence="5">
    <location>
        <begin position="195"/>
        <end position="205"/>
    </location>
</feature>
<feature type="compositionally biased region" description="Polar residues" evidence="5">
    <location>
        <begin position="704"/>
        <end position="715"/>
    </location>
</feature>
<feature type="binding site" evidence="3">
    <location>
        <begin position="332"/>
        <end position="339"/>
    </location>
    <ligand>
        <name>ATP</name>
        <dbReference type="ChEBI" id="CHEBI:30616"/>
    </ligand>
</feature>
<feature type="modified residue" description="Phosphoserine" evidence="2">
    <location>
        <position position="222"/>
    </location>
</feature>
<feature type="modified residue" description="Phosphoserine" evidence="1">
    <location>
        <position position="226"/>
    </location>
</feature>
<feature type="modified residue" description="Phosphoserine" evidence="1">
    <location>
        <position position="722"/>
    </location>
</feature>
<feature type="splice variant" id="VSP_046132" description="In isoform 3." evidence="9">
    <original>MGDEDWEAEINPHMSSYVPIFEKDRYSGENGDNFNRTPASSSEMDDGPSRRDHFMKSGFASGRNFGNRDAGECNKRDNTSTMGGFGVGKSFGNRGFSNSRFEDGDSSGFWR</original>
    <variation>MGSRNLFLTNSP</variation>
    <location>
        <begin position="1"/>
        <end position="111"/>
    </location>
</feature>
<feature type="splice variant" id="VSP_047177" description="In isoform 4." evidence="11">
    <location>
        <begin position="112"/>
        <end position="131"/>
    </location>
</feature>
<feature type="splice variant" id="VSP_011197" description="In isoform 2 and isoform 3." evidence="9 10">
    <original>GYRDGNNSEASGPYRRGGRGSFRGCRGGFGLGSPN</original>
    <variation>D</variation>
    <location>
        <begin position="132"/>
        <end position="166"/>
    </location>
</feature>
<feature type="splice variant" id="VSP_046133" description="In isoform 3." evidence="9">
    <original>GGYKGLNEEVITGSGKN</original>
    <variation>D</variation>
    <location>
        <begin position="209"/>
        <end position="225"/>
    </location>
</feature>
<feature type="sequence variant" id="VAR_019574" description="In dbSNP:rs2306259.">
    <original>G</original>
    <variation>D</variation>
    <location>
        <position position="148"/>
    </location>
</feature>
<feature type="sequence variant" id="VAR_052159" description="In dbSNP:rs2305123.">
    <original>I</original>
    <variation>V</variation>
    <location>
        <position position="287"/>
    </location>
</feature>
<feature type="sequence conflict" description="In Ref. 3; BAG52716." evidence="11" ref="3">
    <original>Q</original>
    <variation>R</variation>
    <location>
        <position position="240"/>
    </location>
</feature>
<feature type="sequence conflict" description="In Ref. 6; AAH47455." evidence="11" ref="6">
    <original>Q</original>
    <variation>K</variation>
    <location>
        <position position="380"/>
    </location>
</feature>
<feature type="sequence conflict" description="In Ref. 1; AAF86585." evidence="11" ref="1">
    <original>I</original>
    <variation>T</variation>
    <location>
        <position position="556"/>
    </location>
</feature>
<feature type="sequence conflict" description="In Ref. 1; AAF86585." evidence="11" ref="1">
    <original>Q</original>
    <variation>R</variation>
    <location>
        <position position="713"/>
    </location>
</feature>